<gene>
    <name evidence="1" type="primary">rbfA</name>
    <name type="ordered locus">SYNPCC7002_A0074</name>
</gene>
<sequence>MANSRRVSKVSSLIKREVSLMLMQDIKDDRVGAGMVSITEVEVSGDLQHAKIFVSIYGSEEARAETMEGLRASQGFVRRTLGQRIRLRRSPEVLFIEDRSLEEGDRMIHLINQLEIKDPEELEAQESEEMV</sequence>
<comment type="function">
    <text evidence="1">One of several proteins that assist in the late maturation steps of the functional core of the 30S ribosomal subunit. Associates with free 30S ribosomal subunits (but not with 30S subunits that are part of 70S ribosomes or polysomes). Required for efficient processing of 16S rRNA. May interact with the 5'-terminal helix region of 16S rRNA.</text>
</comment>
<comment type="subunit">
    <text evidence="1">Monomer. Binds 30S ribosomal subunits, but not 50S ribosomal subunits or 70S ribosomes.</text>
</comment>
<comment type="subcellular location">
    <subcellularLocation>
        <location evidence="1">Cytoplasm</location>
    </subcellularLocation>
</comment>
<comment type="similarity">
    <text evidence="1">Belongs to the RbfA family.</text>
</comment>
<protein>
    <recommendedName>
        <fullName evidence="1">Ribosome-binding factor A</fullName>
    </recommendedName>
</protein>
<organism>
    <name type="scientific">Picosynechococcus sp. (strain ATCC 27264 / PCC 7002 / PR-6)</name>
    <name type="common">Agmenellum quadruplicatum</name>
    <dbReference type="NCBI Taxonomy" id="32049"/>
    <lineage>
        <taxon>Bacteria</taxon>
        <taxon>Bacillati</taxon>
        <taxon>Cyanobacteriota</taxon>
        <taxon>Cyanophyceae</taxon>
        <taxon>Oscillatoriophycideae</taxon>
        <taxon>Chroococcales</taxon>
        <taxon>Geminocystaceae</taxon>
        <taxon>Picosynechococcus</taxon>
    </lineage>
</organism>
<proteinExistence type="inferred from homology"/>
<evidence type="ECO:0000255" key="1">
    <source>
        <dbReference type="HAMAP-Rule" id="MF_00003"/>
    </source>
</evidence>
<keyword id="KW-0963">Cytoplasm</keyword>
<keyword id="KW-1185">Reference proteome</keyword>
<keyword id="KW-0690">Ribosome biogenesis</keyword>
<name>RBFA_PICP2</name>
<feature type="chain" id="PRO_1000088938" description="Ribosome-binding factor A">
    <location>
        <begin position="1"/>
        <end position="131"/>
    </location>
</feature>
<dbReference type="EMBL" id="CP000951">
    <property type="protein sequence ID" value="ACA98091.1"/>
    <property type="molecule type" value="Genomic_DNA"/>
</dbReference>
<dbReference type="RefSeq" id="WP_012305715.1">
    <property type="nucleotide sequence ID" value="NZ_JAHHPU010000005.1"/>
</dbReference>
<dbReference type="SMR" id="B1XLD1"/>
<dbReference type="STRING" id="32049.SYNPCC7002_A0074"/>
<dbReference type="KEGG" id="syp:SYNPCC7002_A0074"/>
<dbReference type="eggNOG" id="COG0858">
    <property type="taxonomic scope" value="Bacteria"/>
</dbReference>
<dbReference type="HOGENOM" id="CLU_089475_2_1_3"/>
<dbReference type="Proteomes" id="UP000001688">
    <property type="component" value="Chromosome"/>
</dbReference>
<dbReference type="GO" id="GO:0005829">
    <property type="term" value="C:cytosol"/>
    <property type="evidence" value="ECO:0007669"/>
    <property type="project" value="TreeGrafter"/>
</dbReference>
<dbReference type="GO" id="GO:0043024">
    <property type="term" value="F:ribosomal small subunit binding"/>
    <property type="evidence" value="ECO:0007669"/>
    <property type="project" value="TreeGrafter"/>
</dbReference>
<dbReference type="GO" id="GO:0030490">
    <property type="term" value="P:maturation of SSU-rRNA"/>
    <property type="evidence" value="ECO:0007669"/>
    <property type="project" value="UniProtKB-UniRule"/>
</dbReference>
<dbReference type="Gene3D" id="3.30.300.20">
    <property type="match status" value="1"/>
</dbReference>
<dbReference type="HAMAP" id="MF_00003">
    <property type="entry name" value="RbfA"/>
    <property type="match status" value="1"/>
</dbReference>
<dbReference type="InterPro" id="IPR015946">
    <property type="entry name" value="KH_dom-like_a/b"/>
</dbReference>
<dbReference type="InterPro" id="IPR000238">
    <property type="entry name" value="RbfA"/>
</dbReference>
<dbReference type="InterPro" id="IPR023799">
    <property type="entry name" value="RbfA_dom_sf"/>
</dbReference>
<dbReference type="InterPro" id="IPR020053">
    <property type="entry name" value="Ribosome-bd_factorA_CS"/>
</dbReference>
<dbReference type="NCBIfam" id="TIGR00082">
    <property type="entry name" value="rbfA"/>
    <property type="match status" value="1"/>
</dbReference>
<dbReference type="PANTHER" id="PTHR33515">
    <property type="entry name" value="RIBOSOME-BINDING FACTOR A, CHLOROPLASTIC-RELATED"/>
    <property type="match status" value="1"/>
</dbReference>
<dbReference type="PANTHER" id="PTHR33515:SF1">
    <property type="entry name" value="RIBOSOME-BINDING FACTOR A, CHLOROPLASTIC-RELATED"/>
    <property type="match status" value="1"/>
</dbReference>
<dbReference type="Pfam" id="PF02033">
    <property type="entry name" value="RBFA"/>
    <property type="match status" value="1"/>
</dbReference>
<dbReference type="SUPFAM" id="SSF89919">
    <property type="entry name" value="Ribosome-binding factor A, RbfA"/>
    <property type="match status" value="1"/>
</dbReference>
<dbReference type="PROSITE" id="PS01319">
    <property type="entry name" value="RBFA"/>
    <property type="match status" value="1"/>
</dbReference>
<accession>B1XLD1</accession>
<reference key="1">
    <citation type="submission" date="2008-02" db="EMBL/GenBank/DDBJ databases">
        <title>Complete sequence of Synechococcus sp. PCC 7002.</title>
        <authorList>
            <person name="Li T."/>
            <person name="Zhao J."/>
            <person name="Zhao C."/>
            <person name="Liu Z."/>
            <person name="Zhao F."/>
            <person name="Marquardt J."/>
            <person name="Nomura C.T."/>
            <person name="Persson S."/>
            <person name="Detter J.C."/>
            <person name="Richardson P.M."/>
            <person name="Lanz C."/>
            <person name="Schuster S.C."/>
            <person name="Wang J."/>
            <person name="Li S."/>
            <person name="Huang X."/>
            <person name="Cai T."/>
            <person name="Yu Z."/>
            <person name="Luo J."/>
            <person name="Zhao J."/>
            <person name="Bryant D.A."/>
        </authorList>
    </citation>
    <scope>NUCLEOTIDE SEQUENCE [LARGE SCALE GENOMIC DNA]</scope>
    <source>
        <strain>ATCC 27264 / PCC 7002 / PR-6</strain>
    </source>
</reference>